<sequence>MSPHEVIGTVPKNSTTFRTQADEHDDHEEALQNLRTGKYEDWPNEAAFDGLTEERGPIKIAVTGNIPTWAAGSLYRTGPGLYKIDTDAGTTFEMSHWFDGLAHTHRFDIIPNEEGSVDIFYSSRRQAEEMMDVIKKQGTWPYYSFGQKADPCLGFFAKAMAAFKGLREPSGEKWHNNVNVAVHVNPPGLEAVRNIVGTRKPAVAENDANVLGHRPELPKSIWVSTDNSTMKQIDPQTLEPIGWATQDVLHPELTGAMSCAHAQRDPDTGDFFNFNLEFGPKPTYRVFRVDASSGKTEILATIREPSVSPAYIHSLFLSPSFVILCIPTSHFGLSGTQIPWERNLVDAIKPYDPSRKTQWIVIDRKHSKGVVARFETDGRFFFHTVNSFEEKAGSDSSDINLYCDVIDFGSHEFIHSLYLDVILNRDSAAKKFYEDEQRARNSLAHLTRYHFIINPDSPTTNLPVTPTPDPKNHEAFRIPAPHAGEIPTINPLYATRKHRYVYSLPFRGRGTITDAIVKTDTVTREALFWDNPKGHTPGEAIFIPRPGGEEEDDGVLLSLVLDGEKGKSYLLCLDAKTMAEMGRAEVDFAIALGFHGAHVPSGRTLTRVEGPEY</sequence>
<accession>A7UXI1</accession>
<protein>
    <recommendedName>
        <fullName evidence="6">Carotenoid dioxygenase</fullName>
        <ecNumber evidence="5">1.13.11.59</ecNumber>
    </recommendedName>
</protein>
<keyword id="KW-0125">Carotenoid biosynthesis</keyword>
<keyword id="KW-0963">Cytoplasm</keyword>
<keyword id="KW-0223">Dioxygenase</keyword>
<keyword id="KW-0408">Iron</keyword>
<keyword id="KW-0479">Metal-binding</keyword>
<keyword id="KW-0560">Oxidoreductase</keyword>
<keyword id="KW-1185">Reference proteome</keyword>
<dbReference type="EC" id="1.13.11.59" evidence="5"/>
<dbReference type="EMBL" id="CM002242">
    <property type="protein sequence ID" value="EDO64867.1"/>
    <property type="molecule type" value="Genomic_DNA"/>
</dbReference>
<dbReference type="RefSeq" id="XP_001727958.1">
    <property type="nucleotide sequence ID" value="XM_001727906.2"/>
</dbReference>
<dbReference type="SMR" id="A7UXI1"/>
<dbReference type="STRING" id="367110.A7UXI1"/>
<dbReference type="PaxDb" id="5141-EFNCRP00000009835"/>
<dbReference type="EnsemblFungi" id="EDO64867">
    <property type="protein sequence ID" value="EDO64867"/>
    <property type="gene ID" value="NCU11424"/>
</dbReference>
<dbReference type="GeneID" id="5846978"/>
<dbReference type="KEGG" id="ncr:NCU11424"/>
<dbReference type="VEuPathDB" id="FungiDB:NCU11424"/>
<dbReference type="HOGENOM" id="CLU_016472_5_0_1"/>
<dbReference type="InParanoid" id="A7UXI1"/>
<dbReference type="OMA" id="WHIGDYN"/>
<dbReference type="OrthoDB" id="407010at2759"/>
<dbReference type="Proteomes" id="UP000001805">
    <property type="component" value="Chromosome 7, Linkage Group VII"/>
</dbReference>
<dbReference type="GO" id="GO:0005829">
    <property type="term" value="C:cytosol"/>
    <property type="evidence" value="ECO:0007669"/>
    <property type="project" value="UniProtKB-SubCell"/>
</dbReference>
<dbReference type="GO" id="GO:0010436">
    <property type="term" value="F:carotenoid dioxygenase activity"/>
    <property type="evidence" value="ECO:0000318"/>
    <property type="project" value="GO_Central"/>
</dbReference>
<dbReference type="GO" id="GO:0046872">
    <property type="term" value="F:metal ion binding"/>
    <property type="evidence" value="ECO:0007669"/>
    <property type="project" value="UniProtKB-KW"/>
</dbReference>
<dbReference type="GO" id="GO:0016121">
    <property type="term" value="P:carotene catabolic process"/>
    <property type="evidence" value="ECO:0000318"/>
    <property type="project" value="GO_Central"/>
</dbReference>
<dbReference type="GO" id="GO:0016117">
    <property type="term" value="P:carotenoid biosynthetic process"/>
    <property type="evidence" value="ECO:0007669"/>
    <property type="project" value="UniProtKB-KW"/>
</dbReference>
<dbReference type="InterPro" id="IPR004294">
    <property type="entry name" value="Carotenoid_Oase"/>
</dbReference>
<dbReference type="PANTHER" id="PTHR10543">
    <property type="entry name" value="BETA-CAROTENE DIOXYGENASE"/>
    <property type="match status" value="1"/>
</dbReference>
<dbReference type="PANTHER" id="PTHR10543:SF24">
    <property type="entry name" value="CAROTENOID ISOMEROOXYGENASE"/>
    <property type="match status" value="1"/>
</dbReference>
<dbReference type="Pfam" id="PF03055">
    <property type="entry name" value="RPE65"/>
    <property type="match status" value="1"/>
</dbReference>
<organism>
    <name type="scientific">Neurospora crassa (strain ATCC 24698 / 74-OR23-1A / CBS 708.71 / DSM 1257 / FGSC 987)</name>
    <dbReference type="NCBI Taxonomy" id="367110"/>
    <lineage>
        <taxon>Eukaryota</taxon>
        <taxon>Fungi</taxon>
        <taxon>Dikarya</taxon>
        <taxon>Ascomycota</taxon>
        <taxon>Pezizomycotina</taxon>
        <taxon>Sordariomycetes</taxon>
        <taxon>Sordariomycetidae</taxon>
        <taxon>Sordariales</taxon>
        <taxon>Sordariaceae</taxon>
        <taxon>Neurospora</taxon>
    </lineage>
</organism>
<proteinExistence type="evidence at transcript level"/>
<comment type="function">
    <text evidence="5 8">Torulene dioxygenase; part of pathway that mediates the biosynthesis of neurosporaxanthin, a carboxylic apocarotenoid acting as an essential protective pigments and leading to orange pigmentation (PubMed:17610084). Cao-2 mediates the cleavage of torulene into beta-apo-4'-carotenal, the aldehyde corresponding to the acidic neurosporaxanthin (PubMed:17610084). Is not able to use gamma-carotene (that it is not desaturated at the C4'-C5' bond) as substrate, which suggests a high specificity of cao-2 in cleaving the C4'-C5' double bond (PubMed:17610084). Neurosporaxanthin is synthesized from geranyl-geranyl pyrophosphate (GGPP) through several enzymatic activities. Phytoene synthase activity performed by the bifunctional enzyme al-2 first produces phytoene from geranyl-geranyl pyrophosphate (GGPP). The phytoene dehydrogenase al-1 then introduces 5 desaturations to lead to 3,4-didehydrolycopene via the intermediates phytofluene, zeta-carotene, neurosporene and lycopene. Al-2 cyclase activity then converts 3,4-didehydrolycopene into torulene. Al-2 can also convet lycopene into gamma-carotene which in turn is converted to beta-carotene by an additional al-2 cyclization reaction. Torulene is the substrate of the dioxidase cao-2 that breaks the molecule, removing five carbon atoms to yield beta-apo-4'-carotenal, whereas the aldehyde dehydrogenase ylo-1 mediates the last step by converting beta-apo-4'-carotenal into neurosporaxanthin (Probable).</text>
</comment>
<comment type="catalytic activity">
    <reaction evidence="5">
        <text>torulene + O2 = 4'-apo-beta-carotenal + 3-methyl-2-butenal</text>
        <dbReference type="Rhea" id="RHEA:31519"/>
        <dbReference type="ChEBI" id="CHEBI:9638"/>
        <dbReference type="ChEBI" id="CHEBI:15379"/>
        <dbReference type="ChEBI" id="CHEBI:15825"/>
        <dbReference type="ChEBI" id="CHEBI:53157"/>
        <dbReference type="EC" id="1.13.11.59"/>
    </reaction>
    <physiologicalReaction direction="left-to-right" evidence="5">
        <dbReference type="Rhea" id="RHEA:31520"/>
    </physiologicalReaction>
</comment>
<comment type="cofactor">
    <cofactor evidence="1">
        <name>Fe(2+)</name>
        <dbReference type="ChEBI" id="CHEBI:29033"/>
    </cofactor>
    <text evidence="1">Binds 1 Fe(2+) ion per subunit.</text>
</comment>
<comment type="pathway">
    <text evidence="5">Carotenoid biosynthesis.</text>
</comment>
<comment type="subcellular location">
    <subcellularLocation>
        <location evidence="2">Cytoplasm</location>
        <location evidence="2">Cytosol</location>
    </subcellularLocation>
</comment>
<comment type="induction">
    <text evidence="5">The expression is subject to photoinduction in a wc-1 and wc-2 dependent manner.</text>
</comment>
<comment type="disruption phenotype">
    <text evidence="5">Impairs the production of neurosporaxanthin and leads to the accumulation of torulene.</text>
</comment>
<comment type="similarity">
    <text evidence="7">Belongs to the carotenoid oxygenase family.</text>
</comment>
<name>CAO2_NEUCR</name>
<evidence type="ECO:0000250" key="1">
    <source>
        <dbReference type="UniProtKB" id="Q7S860"/>
    </source>
</evidence>
<evidence type="ECO:0000250" key="2">
    <source>
        <dbReference type="UniProtKB" id="Q9I993"/>
    </source>
</evidence>
<evidence type="ECO:0000250" key="3">
    <source>
        <dbReference type="UniProtKB" id="Q9JJS6"/>
    </source>
</evidence>
<evidence type="ECO:0000256" key="4">
    <source>
        <dbReference type="SAM" id="MobiDB-lite"/>
    </source>
</evidence>
<evidence type="ECO:0000269" key="5">
    <source>
    </source>
</evidence>
<evidence type="ECO:0000303" key="6">
    <source>
    </source>
</evidence>
<evidence type="ECO:0000305" key="7"/>
<evidence type="ECO:0000305" key="8">
    <source>
    </source>
</evidence>
<reference key="1">
    <citation type="journal article" date="2003" name="Nature">
        <title>The genome sequence of the filamentous fungus Neurospora crassa.</title>
        <authorList>
            <person name="Galagan J.E."/>
            <person name="Calvo S.E."/>
            <person name="Borkovich K.A."/>
            <person name="Selker E.U."/>
            <person name="Read N.D."/>
            <person name="Jaffe D.B."/>
            <person name="FitzHugh W."/>
            <person name="Ma L.-J."/>
            <person name="Smirnov S."/>
            <person name="Purcell S."/>
            <person name="Rehman B."/>
            <person name="Elkins T."/>
            <person name="Engels R."/>
            <person name="Wang S."/>
            <person name="Nielsen C.B."/>
            <person name="Butler J."/>
            <person name="Endrizzi M."/>
            <person name="Qui D."/>
            <person name="Ianakiev P."/>
            <person name="Bell-Pedersen D."/>
            <person name="Nelson M.A."/>
            <person name="Werner-Washburne M."/>
            <person name="Selitrennikoff C.P."/>
            <person name="Kinsey J.A."/>
            <person name="Braun E.L."/>
            <person name="Zelter A."/>
            <person name="Schulte U."/>
            <person name="Kothe G.O."/>
            <person name="Jedd G."/>
            <person name="Mewes H.-W."/>
            <person name="Staben C."/>
            <person name="Marcotte E."/>
            <person name="Greenberg D."/>
            <person name="Roy A."/>
            <person name="Foley K."/>
            <person name="Naylor J."/>
            <person name="Stange-Thomann N."/>
            <person name="Barrett R."/>
            <person name="Gnerre S."/>
            <person name="Kamal M."/>
            <person name="Kamvysselis M."/>
            <person name="Mauceli E.W."/>
            <person name="Bielke C."/>
            <person name="Rudd S."/>
            <person name="Frishman D."/>
            <person name="Krystofova S."/>
            <person name="Rasmussen C."/>
            <person name="Metzenberg R.L."/>
            <person name="Perkins D.D."/>
            <person name="Kroken S."/>
            <person name="Cogoni C."/>
            <person name="Macino G."/>
            <person name="Catcheside D.E.A."/>
            <person name="Li W."/>
            <person name="Pratt R.J."/>
            <person name="Osmani S.A."/>
            <person name="DeSouza C.P.C."/>
            <person name="Glass N.L."/>
            <person name="Orbach M.J."/>
            <person name="Berglund J.A."/>
            <person name="Voelker R."/>
            <person name="Yarden O."/>
            <person name="Plamann M."/>
            <person name="Seiler S."/>
            <person name="Dunlap J.C."/>
            <person name="Radford A."/>
            <person name="Aramayo R."/>
            <person name="Natvig D.O."/>
            <person name="Alex L.A."/>
            <person name="Mannhaupt G."/>
            <person name="Ebbole D.J."/>
            <person name="Freitag M."/>
            <person name="Paulsen I."/>
            <person name="Sachs M.S."/>
            <person name="Lander E.S."/>
            <person name="Nusbaum C."/>
            <person name="Birren B.W."/>
        </authorList>
    </citation>
    <scope>NUCLEOTIDE SEQUENCE [LARGE SCALE GENOMIC DNA]</scope>
    <source>
        <strain>ATCC 24698 / 74-OR23-1A / CBS 708.71 / DSM 1257 / FGSC 987</strain>
    </source>
</reference>
<reference key="2">
    <citation type="journal article" date="2007" name="Mol. Genet. Genomics">
        <title>Identification of the gene responsible for torulene cleavage in the Neurospora carotenoid pathway.</title>
        <authorList>
            <person name="Saelices L."/>
            <person name="Youssar L."/>
            <person name="Holdermann I."/>
            <person name="Al-Babili S."/>
            <person name="Avalos J."/>
        </authorList>
    </citation>
    <scope>FUNCTION</scope>
    <scope>DISRUPTION PHENOTYPE</scope>
    <scope>INDUCTION</scope>
</reference>
<feature type="chain" id="PRO_0000456844" description="Carotenoid dioxygenase">
    <location>
        <begin position="1"/>
        <end position="613"/>
    </location>
</feature>
<feature type="region of interest" description="Disordered" evidence="4">
    <location>
        <begin position="1"/>
        <end position="25"/>
    </location>
</feature>
<feature type="binding site" evidence="1">
    <location>
        <position position="261"/>
    </location>
    <ligand>
        <name>Fe(2+)</name>
        <dbReference type="ChEBI" id="CHEBI:29033"/>
        <note>catalytic</note>
    </ligand>
</feature>
<feature type="binding site" evidence="3">
    <location>
        <position position="313"/>
    </location>
    <ligand>
        <name>Fe(2+)</name>
        <dbReference type="ChEBI" id="CHEBI:29033"/>
        <note>catalytic</note>
    </ligand>
</feature>
<feature type="binding site" evidence="3">
    <location>
        <position position="383"/>
    </location>
    <ligand>
        <name>Fe(2+)</name>
        <dbReference type="ChEBI" id="CHEBI:29033"/>
        <note>catalytic</note>
    </ligand>
</feature>
<feature type="binding site" evidence="3">
    <location>
        <position position="595"/>
    </location>
    <ligand>
        <name>Fe(2+)</name>
        <dbReference type="ChEBI" id="CHEBI:29033"/>
        <note>catalytic</note>
    </ligand>
</feature>
<gene>
    <name evidence="6" type="primary">cao-2</name>
    <name type="ORF">NCU11424</name>
</gene>